<protein>
    <recommendedName>
        <fullName>Transforming growth factor-beta receptor-associated protein 1</fullName>
        <shortName>TGF-beta receptor-associated protein 1</shortName>
        <shortName>TRAP-1</shortName>
        <shortName>TRAP1</shortName>
    </recommendedName>
</protein>
<keyword id="KW-0963">Cytoplasm</keyword>
<keyword id="KW-0967">Endosome</keyword>
<keyword id="KW-0653">Protein transport</keyword>
<keyword id="KW-1267">Proteomics identification</keyword>
<keyword id="KW-1185">Reference proteome</keyword>
<keyword id="KW-0813">Transport</keyword>
<evidence type="ECO:0000250" key="1">
    <source>
        <dbReference type="UniProtKB" id="Q3UR70"/>
    </source>
</evidence>
<evidence type="ECO:0000255" key="2">
    <source>
        <dbReference type="PROSITE-ProRule" id="PRU00795"/>
    </source>
</evidence>
<evidence type="ECO:0000269" key="3">
    <source>
    </source>
</evidence>
<evidence type="ECO:0000269" key="4">
    <source>
    </source>
</evidence>
<evidence type="ECO:0000269" key="5">
    <source>
    </source>
</evidence>
<evidence type="ECO:0000269" key="6">
    <source>
    </source>
</evidence>
<evidence type="ECO:0000269" key="7">
    <source ref="4"/>
</evidence>
<evidence type="ECO:0000305" key="8"/>
<evidence type="ECO:0000305" key="9">
    <source>
    </source>
</evidence>
<evidence type="ECO:0000305" key="10">
    <source>
    </source>
</evidence>
<evidence type="ECO:0000305" key="11">
    <source>
    </source>
</evidence>
<sequence>MMSIKAFTLVSAVERELLMGDKERVNIECVECCGRDLYVGTNDCFVYHFLLEERPVPAGPATFTATKQLQRHLGFKKPVNELRAASALNRLLVLCDNSISLVNMLNLEPVPSGARIKGAATFALNENPVSGDPFCVEVCIISVKRRTIQMFLVYEDRVQIVKEVSTAEQPLAVAVDGHFLCLALTTQYIIHNYSTGVSQDLFPYCSEERPPIVKRIGRQEFLLAGPGGLGMFATVAGISQRAPVHWSENVIGAAVSFPYVIALDDEFITVHSMLDQQQKQTLPFKEGHILQDFEGRVIVATSKGVYILVPLPLEKQIQDLLASRRVEEALVLAKGARRNIPKEKFQVMYRRILQQAGFIQFAQLQFLEAKELFRSGQLDVRELISLYPFLLPTSSSFTRSHPPLHEYADLNQLTQGDQEKMAKCKRFLMSYLNEVRSTEVANGYKEDIDTALLKLYAEADHDSLLDLLVTENFCLLTDSAAWLEKHKKYFALGLLYHYNNQDAAAVQLWVNIVNGDVQDSTRSDLYEYIVDFLTYCLDEELVWAYADWVLQKSEEVGVQVFTKRPLDEQQKNSFNPDDIINCLKKYPKALVKYLEHLVIDKRLQKEEYHTHLAVLYLEEVLLQRASASGKGAEATETQAKLRRLLQKSDLYRVHFLLERLQGAGLPMESAILHGKLGEHEKALHILVHELQDFAAAEDYCLWCSEGRDPPHRQQLFHTLLAIYLHAGPTAHELAVAAVDLLNRHATEFDAAQVLQMLPDTWSVQLLCPFLMGAMRDSIHARRTMQVALGLARSENLIYTYDKMKLKGSSIQLSDKKLCQICQNPFCEPVFVRYPNGGLVHTHCAASRHTNPSSSSPGTRT</sequence>
<organism>
    <name type="scientific">Homo sapiens</name>
    <name type="common">Human</name>
    <dbReference type="NCBI Taxonomy" id="9606"/>
    <lineage>
        <taxon>Eukaryota</taxon>
        <taxon>Metazoa</taxon>
        <taxon>Chordata</taxon>
        <taxon>Craniata</taxon>
        <taxon>Vertebrata</taxon>
        <taxon>Euteleostomi</taxon>
        <taxon>Mammalia</taxon>
        <taxon>Eutheria</taxon>
        <taxon>Euarchontoglires</taxon>
        <taxon>Primates</taxon>
        <taxon>Haplorrhini</taxon>
        <taxon>Catarrhini</taxon>
        <taxon>Hominidae</taxon>
        <taxon>Homo</taxon>
    </lineage>
</organism>
<comment type="function">
    <text evidence="4 6">Plays a role in the TGF-beta/activin signaling pathway. It associates with inactive heteromeric TGF-beta and activin receptor complexes, mainly through the type II receptor, and is released upon activation of signaling. May recruit SMAD4 to the vicinity of the receptor complex and facilitate its interaction with receptor-regulated Smads, such as SMAD2.</text>
</comment>
<comment type="function">
    <text evidence="5 10">Plays a role in vesicle-mediated protein trafficking of the endocytic membrane transport pathway. Believed to act as a component of the putative CORVET endosomal tethering complexes which is proposed to be involved in the Rab5-to-Rab7 endosome conversion probably implicating MON1A/B, and via binding SNAREs and SNARE complexes to mediate tethering and docking events during SNARE-mediated membrane fusion. The CORVET complex is proposed to function as a Rab5 effector to mediate early endosome fusion probably in specific endosome subpopulations (PubMed:25266290). Functions predominantly in APPL1-containing endosomes and in degradative but not recycling trafficking of endocytosed cargo (PubMed:25266290).</text>
</comment>
<comment type="subunit">
    <text evidence="1 3 4 5 6 10">Interacts with TGFBR2 and ACVR2B; in the absence of ligand stimulation. Interacts with TGFBR1, ACVRL1, BMPR1A and ACVR1B; in the absence of ligand stimulation and to a less extent. Interacts with SMAD4; the interaction seems to be mutually exclusive with the interaction of SMAD4 and phosphorylated SMAD2 (PubMed:11278302, PubMed:9545258). May interact with ALOX5 (PubMed:10051563). Interacts with RAB5C (By similarity). Interacts with VPS8, VPS11 and VPS16. Component of the putative class C core vacuole/endosome tethering (CORVET) complex; the core of which composed of the class C Vps proteins VPS11, VPS16, VPS18 and VPS33A, is associated with VPS8 and TGFBRAP1 (PubMed:25266290).</text>
</comment>
<comment type="interaction">
    <interactant intactId="EBI-2954829">
        <id>Q8WUH2</id>
    </interactant>
    <interactant intactId="EBI-373380">
        <id>Q9H270</id>
        <label>VPS11</label>
    </interactant>
    <organismsDiffer>false</organismsDiffer>
    <experiments>6</experiments>
</comment>
<comment type="interaction">
    <interactant intactId="EBI-2954829">
        <id>Q8WUH2</id>
    </interactant>
    <interactant intactId="EBI-2655929">
        <id>Q9H269</id>
        <label>VPS16</label>
    </interactant>
    <organismsDiffer>false</organismsDiffer>
    <experiments>6</experiments>
</comment>
<comment type="interaction">
    <interactant intactId="EBI-2954829">
        <id>Q8WUH2</id>
    </interactant>
    <interactant intactId="EBI-7261494">
        <id>Q8N3P4</id>
        <label>VPS8</label>
    </interactant>
    <organismsDiffer>false</organismsDiffer>
    <experiments>5</experiments>
</comment>
<comment type="subcellular location">
    <subcellularLocation>
        <location evidence="4">Cytoplasm</location>
    </subcellularLocation>
    <subcellularLocation>
        <location evidence="5">Early endosome</location>
    </subcellularLocation>
    <text>Colocalizes with TGF-beta receptors in the absence of signaling.</text>
</comment>
<comment type="similarity">
    <text evidence="8">Belongs to the TRAP1 family.</text>
</comment>
<comment type="caution">
    <text evidence="9 11">In (PubMed:9545258) and in (PubMed:10051563) experimental information is given for a truncated version of TGFBRAP1 (sequence of 474-860), which was later shown to act as a dominant negative.</text>
</comment>
<comment type="online information" name="Atlas of Genetics and Cytogenetics in Oncology and Haematology">
    <link uri="https://atlasgeneticsoncology.org/gene/42542/TGFBRAP1"/>
</comment>
<feature type="chain" id="PRO_0000345405" description="Transforming growth factor-beta receptor-associated protein 1">
    <location>
        <begin position="1"/>
        <end position="860"/>
    </location>
</feature>
<feature type="domain" description="CNH" evidence="2">
    <location>
        <begin position="24"/>
        <end position="297"/>
    </location>
</feature>
<feature type="repeat" description="CHCR">
    <location>
        <begin position="564"/>
        <end position="728"/>
    </location>
</feature>
<feature type="sequence variant" id="VAR_045822" description="In dbSNP:rs2241797." evidence="6 7">
    <original>H</original>
    <variation>R</variation>
    <location>
        <position position="725"/>
    </location>
</feature>
<feature type="sequence conflict" description="In Ref. 2; BAF84071." evidence="8" ref="2">
    <original>L</original>
    <variation>S</variation>
    <location>
        <position position="805"/>
    </location>
</feature>
<reference key="1">
    <citation type="journal article" date="1998" name="J. Biol. Chem.">
        <title>A novel protein distinguishes between quiescent and activated forms of the type I transforming growth factor beta receptor.</title>
        <authorList>
            <person name="Charng M.-J."/>
            <person name="Zhang D."/>
            <person name="Kinnunen P."/>
            <person name="Schneider M.D."/>
        </authorList>
    </citation>
    <scope>NUCLEOTIDE SEQUENCE [MRNA]</scope>
    <scope>FUNCTION</scope>
    <scope>INTERACTION WITH TGFBR1</scope>
    <scope>VARIANT ARG-725</scope>
</reference>
<reference key="2">
    <citation type="journal article" date="2004" name="Nat. Genet.">
        <title>Complete sequencing and characterization of 21,243 full-length human cDNAs.</title>
        <authorList>
            <person name="Ota T."/>
            <person name="Suzuki Y."/>
            <person name="Nishikawa T."/>
            <person name="Otsuki T."/>
            <person name="Sugiyama T."/>
            <person name="Irie R."/>
            <person name="Wakamatsu A."/>
            <person name="Hayashi K."/>
            <person name="Sato H."/>
            <person name="Nagai K."/>
            <person name="Kimura K."/>
            <person name="Makita H."/>
            <person name="Sekine M."/>
            <person name="Obayashi M."/>
            <person name="Nishi T."/>
            <person name="Shibahara T."/>
            <person name="Tanaka T."/>
            <person name="Ishii S."/>
            <person name="Yamamoto J."/>
            <person name="Saito K."/>
            <person name="Kawai Y."/>
            <person name="Isono Y."/>
            <person name="Nakamura Y."/>
            <person name="Nagahari K."/>
            <person name="Murakami K."/>
            <person name="Yasuda T."/>
            <person name="Iwayanagi T."/>
            <person name="Wagatsuma M."/>
            <person name="Shiratori A."/>
            <person name="Sudo H."/>
            <person name="Hosoiri T."/>
            <person name="Kaku Y."/>
            <person name="Kodaira H."/>
            <person name="Kondo H."/>
            <person name="Sugawara M."/>
            <person name="Takahashi M."/>
            <person name="Kanda K."/>
            <person name="Yokoi T."/>
            <person name="Furuya T."/>
            <person name="Kikkawa E."/>
            <person name="Omura Y."/>
            <person name="Abe K."/>
            <person name="Kamihara K."/>
            <person name="Katsuta N."/>
            <person name="Sato K."/>
            <person name="Tanikawa M."/>
            <person name="Yamazaki M."/>
            <person name="Ninomiya K."/>
            <person name="Ishibashi T."/>
            <person name="Yamashita H."/>
            <person name="Murakawa K."/>
            <person name="Fujimori K."/>
            <person name="Tanai H."/>
            <person name="Kimata M."/>
            <person name="Watanabe M."/>
            <person name="Hiraoka S."/>
            <person name="Chiba Y."/>
            <person name="Ishida S."/>
            <person name="Ono Y."/>
            <person name="Takiguchi S."/>
            <person name="Watanabe S."/>
            <person name="Yosida M."/>
            <person name="Hotuta T."/>
            <person name="Kusano J."/>
            <person name="Kanehori K."/>
            <person name="Takahashi-Fujii A."/>
            <person name="Hara H."/>
            <person name="Tanase T.-O."/>
            <person name="Nomura Y."/>
            <person name="Togiya S."/>
            <person name="Komai F."/>
            <person name="Hara R."/>
            <person name="Takeuchi K."/>
            <person name="Arita M."/>
            <person name="Imose N."/>
            <person name="Musashino K."/>
            <person name="Yuuki H."/>
            <person name="Oshima A."/>
            <person name="Sasaki N."/>
            <person name="Aotsuka S."/>
            <person name="Yoshikawa Y."/>
            <person name="Matsunawa H."/>
            <person name="Ichihara T."/>
            <person name="Shiohata N."/>
            <person name="Sano S."/>
            <person name="Moriya S."/>
            <person name="Momiyama H."/>
            <person name="Satoh N."/>
            <person name="Takami S."/>
            <person name="Terashima Y."/>
            <person name="Suzuki O."/>
            <person name="Nakagawa S."/>
            <person name="Senoh A."/>
            <person name="Mizoguchi H."/>
            <person name="Goto Y."/>
            <person name="Shimizu F."/>
            <person name="Wakebe H."/>
            <person name="Hishigaki H."/>
            <person name="Watanabe T."/>
            <person name="Sugiyama A."/>
            <person name="Takemoto M."/>
            <person name="Kawakami B."/>
            <person name="Yamazaki M."/>
            <person name="Watanabe K."/>
            <person name="Kumagai A."/>
            <person name="Itakura S."/>
            <person name="Fukuzumi Y."/>
            <person name="Fujimori Y."/>
            <person name="Komiyama M."/>
            <person name="Tashiro H."/>
            <person name="Tanigami A."/>
            <person name="Fujiwara T."/>
            <person name="Ono T."/>
            <person name="Yamada K."/>
            <person name="Fujii Y."/>
            <person name="Ozaki K."/>
            <person name="Hirao M."/>
            <person name="Ohmori Y."/>
            <person name="Kawabata A."/>
            <person name="Hikiji T."/>
            <person name="Kobatake N."/>
            <person name="Inagaki H."/>
            <person name="Ikema Y."/>
            <person name="Okamoto S."/>
            <person name="Okitani R."/>
            <person name="Kawakami T."/>
            <person name="Noguchi S."/>
            <person name="Itoh T."/>
            <person name="Shigeta K."/>
            <person name="Senba T."/>
            <person name="Matsumura K."/>
            <person name="Nakajima Y."/>
            <person name="Mizuno T."/>
            <person name="Morinaga M."/>
            <person name="Sasaki M."/>
            <person name="Togashi T."/>
            <person name="Oyama M."/>
            <person name="Hata H."/>
            <person name="Watanabe M."/>
            <person name="Komatsu T."/>
            <person name="Mizushima-Sugano J."/>
            <person name="Satoh T."/>
            <person name="Shirai Y."/>
            <person name="Takahashi Y."/>
            <person name="Nakagawa K."/>
            <person name="Okumura K."/>
            <person name="Nagase T."/>
            <person name="Nomura N."/>
            <person name="Kikuchi H."/>
            <person name="Masuho Y."/>
            <person name="Yamashita R."/>
            <person name="Nakai K."/>
            <person name="Yada T."/>
            <person name="Nakamura Y."/>
            <person name="Ohara O."/>
            <person name="Isogai T."/>
            <person name="Sugano S."/>
        </authorList>
    </citation>
    <scope>NUCLEOTIDE SEQUENCE [LARGE SCALE MRNA]</scope>
    <source>
        <tissue>Brain</tissue>
    </source>
</reference>
<reference key="3">
    <citation type="journal article" date="2005" name="Nature">
        <title>Generation and annotation of the DNA sequences of human chromosomes 2 and 4.</title>
        <authorList>
            <person name="Hillier L.W."/>
            <person name="Graves T.A."/>
            <person name="Fulton R.S."/>
            <person name="Fulton L.A."/>
            <person name="Pepin K.H."/>
            <person name="Minx P."/>
            <person name="Wagner-McPherson C."/>
            <person name="Layman D."/>
            <person name="Wylie K."/>
            <person name="Sekhon M."/>
            <person name="Becker M.C."/>
            <person name="Fewell G.A."/>
            <person name="Delehaunty K.D."/>
            <person name="Miner T.L."/>
            <person name="Nash W.E."/>
            <person name="Kremitzki C."/>
            <person name="Oddy L."/>
            <person name="Du H."/>
            <person name="Sun H."/>
            <person name="Bradshaw-Cordum H."/>
            <person name="Ali J."/>
            <person name="Carter J."/>
            <person name="Cordes M."/>
            <person name="Harris A."/>
            <person name="Isak A."/>
            <person name="van Brunt A."/>
            <person name="Nguyen C."/>
            <person name="Du F."/>
            <person name="Courtney L."/>
            <person name="Kalicki J."/>
            <person name="Ozersky P."/>
            <person name="Abbott S."/>
            <person name="Armstrong J."/>
            <person name="Belter E.A."/>
            <person name="Caruso L."/>
            <person name="Cedroni M."/>
            <person name="Cotton M."/>
            <person name="Davidson T."/>
            <person name="Desai A."/>
            <person name="Elliott G."/>
            <person name="Erb T."/>
            <person name="Fronick C."/>
            <person name="Gaige T."/>
            <person name="Haakenson W."/>
            <person name="Haglund K."/>
            <person name="Holmes A."/>
            <person name="Harkins R."/>
            <person name="Kim K."/>
            <person name="Kruchowski S.S."/>
            <person name="Strong C.M."/>
            <person name="Grewal N."/>
            <person name="Goyea E."/>
            <person name="Hou S."/>
            <person name="Levy A."/>
            <person name="Martinka S."/>
            <person name="Mead K."/>
            <person name="McLellan M.D."/>
            <person name="Meyer R."/>
            <person name="Randall-Maher J."/>
            <person name="Tomlinson C."/>
            <person name="Dauphin-Kohlberg S."/>
            <person name="Kozlowicz-Reilly A."/>
            <person name="Shah N."/>
            <person name="Swearengen-Shahid S."/>
            <person name="Snider J."/>
            <person name="Strong J.T."/>
            <person name="Thompson J."/>
            <person name="Yoakum M."/>
            <person name="Leonard S."/>
            <person name="Pearman C."/>
            <person name="Trani L."/>
            <person name="Radionenko M."/>
            <person name="Waligorski J.E."/>
            <person name="Wang C."/>
            <person name="Rock S.M."/>
            <person name="Tin-Wollam A.-M."/>
            <person name="Maupin R."/>
            <person name="Latreille P."/>
            <person name="Wendl M.C."/>
            <person name="Yang S.-P."/>
            <person name="Pohl C."/>
            <person name="Wallis J.W."/>
            <person name="Spieth J."/>
            <person name="Bieri T.A."/>
            <person name="Berkowicz N."/>
            <person name="Nelson J.O."/>
            <person name="Osborne J."/>
            <person name="Ding L."/>
            <person name="Meyer R."/>
            <person name="Sabo A."/>
            <person name="Shotland Y."/>
            <person name="Sinha P."/>
            <person name="Wohldmann P.E."/>
            <person name="Cook L.L."/>
            <person name="Hickenbotham M.T."/>
            <person name="Eldred J."/>
            <person name="Williams D."/>
            <person name="Jones T.A."/>
            <person name="She X."/>
            <person name="Ciccarelli F.D."/>
            <person name="Izaurralde E."/>
            <person name="Taylor J."/>
            <person name="Schmutz J."/>
            <person name="Myers R.M."/>
            <person name="Cox D.R."/>
            <person name="Huang X."/>
            <person name="McPherson J.D."/>
            <person name="Mardis E.R."/>
            <person name="Clifton S.W."/>
            <person name="Warren W.C."/>
            <person name="Chinwalla A.T."/>
            <person name="Eddy S.R."/>
            <person name="Marra M.A."/>
            <person name="Ovcharenko I."/>
            <person name="Furey T.S."/>
            <person name="Miller W."/>
            <person name="Eichler E.E."/>
            <person name="Bork P."/>
            <person name="Suyama M."/>
            <person name="Torrents D."/>
            <person name="Waterston R.H."/>
            <person name="Wilson R.K."/>
        </authorList>
    </citation>
    <scope>NUCLEOTIDE SEQUENCE [LARGE SCALE GENOMIC DNA]</scope>
</reference>
<reference key="4">
    <citation type="submission" date="2005-09" db="EMBL/GenBank/DDBJ databases">
        <authorList>
            <person name="Mural R.J."/>
            <person name="Istrail S."/>
            <person name="Sutton G.G."/>
            <person name="Florea L."/>
            <person name="Halpern A.L."/>
            <person name="Mobarry C.M."/>
            <person name="Lippert R."/>
            <person name="Walenz B."/>
            <person name="Shatkay H."/>
            <person name="Dew I."/>
            <person name="Miller J.R."/>
            <person name="Flanigan M.J."/>
            <person name="Edwards N.J."/>
            <person name="Bolanos R."/>
            <person name="Fasulo D."/>
            <person name="Halldorsson B.V."/>
            <person name="Hannenhalli S."/>
            <person name="Turner R."/>
            <person name="Yooseph S."/>
            <person name="Lu F."/>
            <person name="Nusskern D.R."/>
            <person name="Shue B.C."/>
            <person name="Zheng X.H."/>
            <person name="Zhong F."/>
            <person name="Delcher A.L."/>
            <person name="Huson D.H."/>
            <person name="Kravitz S.A."/>
            <person name="Mouchard L."/>
            <person name="Reinert K."/>
            <person name="Remington K.A."/>
            <person name="Clark A.G."/>
            <person name="Waterman M.S."/>
            <person name="Eichler E.E."/>
            <person name="Adams M.D."/>
            <person name="Hunkapiller M.W."/>
            <person name="Myers E.W."/>
            <person name="Venter J.C."/>
        </authorList>
    </citation>
    <scope>NUCLEOTIDE SEQUENCE [LARGE SCALE GENOMIC DNA]</scope>
    <scope>VARIANT ARG-725</scope>
</reference>
<reference key="5">
    <citation type="journal article" date="2004" name="Genome Res.">
        <title>The status, quality, and expansion of the NIH full-length cDNA project: the Mammalian Gene Collection (MGC).</title>
        <authorList>
            <consortium name="The MGC Project Team"/>
        </authorList>
    </citation>
    <scope>NUCLEOTIDE SEQUENCE [LARGE SCALE MRNA]</scope>
    <source>
        <tissue>Lymph</tissue>
    </source>
</reference>
<reference key="6">
    <citation type="journal article" date="1999" name="Proc. Natl. Acad. Sci. U.S.A.">
        <title>Interaction of 5-lipoxygenase with cellular proteins.</title>
        <authorList>
            <person name="Provost P."/>
            <person name="Samuelsson B."/>
            <person name="Radmark O."/>
        </authorList>
    </citation>
    <scope>INTERACTION WITH ALOX5</scope>
</reference>
<reference key="7">
    <citation type="journal article" date="2001" name="J. Biol. Chem.">
        <title>Transforming growth factor-beta receptor-associated protein 1 is a Smad4 chaperone.</title>
        <authorList>
            <person name="Wurthner J.U."/>
            <person name="Frank D.B."/>
            <person name="Felici A."/>
            <person name="Green H.M."/>
            <person name="Cao Z."/>
            <person name="Schneider M.D."/>
            <person name="McNally J.G."/>
            <person name="Lechleider R.J."/>
            <person name="Roberts A.B."/>
        </authorList>
    </citation>
    <scope>FUNCTION</scope>
    <scope>INTERACTION WITH TGFBR2; ACVR2B; TGFBR1; ACVRL1; BMPR1A; ACVR1B AND SMAD4</scope>
    <scope>SUBCELLULAR LOCATION</scope>
</reference>
<reference key="8">
    <citation type="journal article" date="2010" name="Sci. Signal.">
        <title>Quantitative phosphoproteomics reveals widespread full phosphorylation site occupancy during mitosis.</title>
        <authorList>
            <person name="Olsen J.V."/>
            <person name="Vermeulen M."/>
            <person name="Santamaria A."/>
            <person name="Kumar C."/>
            <person name="Miller M.L."/>
            <person name="Jensen L.J."/>
            <person name="Gnad F."/>
            <person name="Cox J."/>
            <person name="Jensen T.S."/>
            <person name="Nigg E.A."/>
            <person name="Brunak S."/>
            <person name="Mann M."/>
        </authorList>
    </citation>
    <scope>IDENTIFICATION BY MASS SPECTROMETRY [LARGE SCALE ANALYSIS]</scope>
    <source>
        <tissue>Cervix carcinoma</tissue>
    </source>
</reference>
<reference key="9">
    <citation type="journal article" date="2014" name="Traffic">
        <title>Mammalian CORVET is required for fusion and conversion of distinct early endosome subpopulations.</title>
        <authorList>
            <person name="Perini E.D."/>
            <person name="Schaefer R."/>
            <person name="Stoeter M."/>
            <person name="Kalaidzidis Y."/>
            <person name="Zerial M."/>
        </authorList>
    </citation>
    <scope>FUNCTION</scope>
    <scope>FUNCTION OF THE CORVET COMPLEX</scope>
    <scope>INTERACTION WITH VPS8; VPS11 AND VPS16</scope>
    <scope>SUBUNIT</scope>
    <scope>SUBCELLULAR LOCATION</scope>
</reference>
<proteinExistence type="evidence at protein level"/>
<dbReference type="EMBL" id="AF022795">
    <property type="protein sequence ID" value="AAC16903.1"/>
    <property type="molecule type" value="mRNA"/>
</dbReference>
<dbReference type="EMBL" id="AK291382">
    <property type="protein sequence ID" value="BAF84071.1"/>
    <property type="molecule type" value="mRNA"/>
</dbReference>
<dbReference type="EMBL" id="AC012360">
    <property type="protein sequence ID" value="AAY15010.1"/>
    <property type="molecule type" value="Genomic_DNA"/>
</dbReference>
<dbReference type="EMBL" id="CH471127">
    <property type="protein sequence ID" value="EAX01764.1"/>
    <property type="molecule type" value="Genomic_DNA"/>
</dbReference>
<dbReference type="EMBL" id="CH471127">
    <property type="protein sequence ID" value="EAX01765.1"/>
    <property type="molecule type" value="Genomic_DNA"/>
</dbReference>
<dbReference type="EMBL" id="BC020548">
    <property type="protein sequence ID" value="AAH20548.1"/>
    <property type="molecule type" value="mRNA"/>
</dbReference>
<dbReference type="CCDS" id="CCDS2067.1"/>
<dbReference type="PIR" id="T08622">
    <property type="entry name" value="T08622"/>
</dbReference>
<dbReference type="RefSeq" id="NP_001136093.1">
    <property type="nucleotide sequence ID" value="NM_001142621.3"/>
</dbReference>
<dbReference type="RefSeq" id="NP_004248.2">
    <property type="nucleotide sequence ID" value="NM_004257.5"/>
</dbReference>
<dbReference type="SMR" id="Q8WUH2"/>
<dbReference type="BioGRID" id="114792">
    <property type="interactions" value="54"/>
</dbReference>
<dbReference type="ComplexPortal" id="CPX-6213">
    <property type="entry name" value="CORVET tethering complex"/>
</dbReference>
<dbReference type="CORUM" id="Q8WUH2"/>
<dbReference type="FunCoup" id="Q8WUH2">
    <property type="interactions" value="2133"/>
</dbReference>
<dbReference type="IntAct" id="Q8WUH2">
    <property type="interactions" value="42"/>
</dbReference>
<dbReference type="STRING" id="9606.ENSP00000377027"/>
<dbReference type="iPTMnet" id="Q8WUH2"/>
<dbReference type="PhosphoSitePlus" id="Q8WUH2"/>
<dbReference type="BioMuta" id="TGFBRAP1"/>
<dbReference type="DMDM" id="74730711"/>
<dbReference type="jPOST" id="Q8WUH2"/>
<dbReference type="MassIVE" id="Q8WUH2"/>
<dbReference type="PaxDb" id="9606-ENSP00000377027"/>
<dbReference type="PeptideAtlas" id="Q8WUH2"/>
<dbReference type="ProteomicsDB" id="74676"/>
<dbReference type="Pumba" id="Q8WUH2"/>
<dbReference type="Antibodypedia" id="49233">
    <property type="antibodies" value="152 antibodies from 21 providers"/>
</dbReference>
<dbReference type="DNASU" id="9392"/>
<dbReference type="Ensembl" id="ENST00000393359.7">
    <property type="protein sequence ID" value="ENSP00000377027.2"/>
    <property type="gene ID" value="ENSG00000135966.14"/>
</dbReference>
<dbReference type="Ensembl" id="ENST00000595531.5">
    <property type="protein sequence ID" value="ENSP00000471434.2"/>
    <property type="gene ID" value="ENSG00000135966.14"/>
</dbReference>
<dbReference type="GeneID" id="9392"/>
<dbReference type="KEGG" id="hsa:9392"/>
<dbReference type="MANE-Select" id="ENST00000393359.7">
    <property type="protein sequence ID" value="ENSP00000377027.2"/>
    <property type="RefSeq nucleotide sequence ID" value="NM_004257.6"/>
    <property type="RefSeq protein sequence ID" value="NP_004248.2"/>
</dbReference>
<dbReference type="UCSC" id="uc002tcq.5">
    <property type="organism name" value="human"/>
</dbReference>
<dbReference type="AGR" id="HGNC:16836"/>
<dbReference type="CTD" id="9392"/>
<dbReference type="DisGeNET" id="9392"/>
<dbReference type="GeneCards" id="TGFBRAP1"/>
<dbReference type="HGNC" id="HGNC:16836">
    <property type="gene designation" value="TGFBRAP1"/>
</dbReference>
<dbReference type="HPA" id="ENSG00000135966">
    <property type="expression patterns" value="Low tissue specificity"/>
</dbReference>
<dbReference type="MalaCards" id="TGFBRAP1"/>
<dbReference type="MIM" id="606237">
    <property type="type" value="gene"/>
</dbReference>
<dbReference type="neXtProt" id="NX_Q8WUH2"/>
<dbReference type="OpenTargets" id="ENSG00000135966"/>
<dbReference type="PharmGKB" id="PA134963946"/>
<dbReference type="VEuPathDB" id="HostDB:ENSG00000135966"/>
<dbReference type="eggNOG" id="KOG2063">
    <property type="taxonomic scope" value="Eukaryota"/>
</dbReference>
<dbReference type="GeneTree" id="ENSGT00530000063596"/>
<dbReference type="HOGENOM" id="CLU_004190_3_0_1"/>
<dbReference type="InParanoid" id="Q8WUH2"/>
<dbReference type="OMA" id="MFVTSEG"/>
<dbReference type="OrthoDB" id="10258882at2759"/>
<dbReference type="PAN-GO" id="Q8WUH2">
    <property type="GO annotations" value="4 GO annotations based on evolutionary models"/>
</dbReference>
<dbReference type="PhylomeDB" id="Q8WUH2"/>
<dbReference type="TreeFam" id="TF328650"/>
<dbReference type="PathwayCommons" id="Q8WUH2"/>
<dbReference type="SignaLink" id="Q8WUH2"/>
<dbReference type="SIGNOR" id="Q8WUH2"/>
<dbReference type="BioGRID-ORCS" id="9392">
    <property type="hits" value="72 hits in 1157 CRISPR screens"/>
</dbReference>
<dbReference type="ChiTaRS" id="TGFBRAP1">
    <property type="organism name" value="human"/>
</dbReference>
<dbReference type="GenomeRNAi" id="9392"/>
<dbReference type="Pharos" id="Q8WUH2">
    <property type="development level" value="Tbio"/>
</dbReference>
<dbReference type="PRO" id="PR:Q8WUH2"/>
<dbReference type="Proteomes" id="UP000005640">
    <property type="component" value="Chromosome 2"/>
</dbReference>
<dbReference type="RNAct" id="Q8WUH2">
    <property type="molecule type" value="protein"/>
</dbReference>
<dbReference type="Bgee" id="ENSG00000135966">
    <property type="expression patterns" value="Expressed in secondary oocyte and 173 other cell types or tissues"/>
</dbReference>
<dbReference type="GO" id="GO:0033263">
    <property type="term" value="C:CORVET complex"/>
    <property type="evidence" value="ECO:0000303"/>
    <property type="project" value="ComplexPortal"/>
</dbReference>
<dbReference type="GO" id="GO:0005737">
    <property type="term" value="C:cytoplasm"/>
    <property type="evidence" value="ECO:0000318"/>
    <property type="project" value="GO_Central"/>
</dbReference>
<dbReference type="GO" id="GO:0005769">
    <property type="term" value="C:early endosome"/>
    <property type="evidence" value="ECO:0000314"/>
    <property type="project" value="UniProtKB"/>
</dbReference>
<dbReference type="GO" id="GO:0043231">
    <property type="term" value="C:intracellular membrane-bounded organelle"/>
    <property type="evidence" value="ECO:0000314"/>
    <property type="project" value="HPA"/>
</dbReference>
<dbReference type="GO" id="GO:0016020">
    <property type="term" value="C:membrane"/>
    <property type="evidence" value="ECO:0000314"/>
    <property type="project" value="UniProtKB"/>
</dbReference>
<dbReference type="GO" id="GO:0046332">
    <property type="term" value="F:SMAD binding"/>
    <property type="evidence" value="ECO:0000314"/>
    <property type="project" value="UniProtKB"/>
</dbReference>
<dbReference type="GO" id="GO:0005160">
    <property type="term" value="F:transforming growth factor beta receptor binding"/>
    <property type="evidence" value="ECO:0000314"/>
    <property type="project" value="UniProtKB"/>
</dbReference>
<dbReference type="GO" id="GO:0006914">
    <property type="term" value="P:autophagy"/>
    <property type="evidence" value="ECO:0000318"/>
    <property type="project" value="GO_Central"/>
</dbReference>
<dbReference type="GO" id="GO:0034058">
    <property type="term" value="P:endosomal vesicle fusion"/>
    <property type="evidence" value="ECO:0000315"/>
    <property type="project" value="UniProtKB"/>
</dbReference>
<dbReference type="GO" id="GO:0008333">
    <property type="term" value="P:endosome to lysosome transport"/>
    <property type="evidence" value="ECO:0000315"/>
    <property type="project" value="UniProtKB"/>
</dbReference>
<dbReference type="GO" id="GO:0006886">
    <property type="term" value="P:intracellular protein transport"/>
    <property type="evidence" value="ECO:0007669"/>
    <property type="project" value="InterPro"/>
</dbReference>
<dbReference type="GO" id="GO:0006355">
    <property type="term" value="P:regulation of DNA-templated transcription"/>
    <property type="evidence" value="ECO:0000314"/>
    <property type="project" value="UniProtKB"/>
</dbReference>
<dbReference type="GO" id="GO:0035542">
    <property type="term" value="P:regulation of SNARE complex assembly"/>
    <property type="evidence" value="ECO:0000303"/>
    <property type="project" value="ComplexPortal"/>
</dbReference>
<dbReference type="GO" id="GO:0007165">
    <property type="term" value="P:signal transduction"/>
    <property type="evidence" value="ECO:0000314"/>
    <property type="project" value="UniProtKB"/>
</dbReference>
<dbReference type="GO" id="GO:0007179">
    <property type="term" value="P:transforming growth factor beta receptor signaling pathway"/>
    <property type="evidence" value="ECO:0000304"/>
    <property type="project" value="UniProtKB"/>
</dbReference>
<dbReference type="InterPro" id="IPR000547">
    <property type="entry name" value="Clathrin_H-chain/VPS_repeat"/>
</dbReference>
<dbReference type="InterPro" id="IPR001180">
    <property type="entry name" value="CNH_dom"/>
</dbReference>
<dbReference type="InterPro" id="IPR032914">
    <property type="entry name" value="Vam6/VPS39/TRAP1"/>
</dbReference>
<dbReference type="InterPro" id="IPR019452">
    <property type="entry name" value="VPS39/TGF_beta_rcpt-assoc_1"/>
</dbReference>
<dbReference type="InterPro" id="IPR019453">
    <property type="entry name" value="VPS39/TGFA1_Znf"/>
</dbReference>
<dbReference type="PANTHER" id="PTHR12894">
    <property type="entry name" value="CNH DOMAIN CONTAINING"/>
    <property type="match status" value="1"/>
</dbReference>
<dbReference type="PANTHER" id="PTHR12894:SF27">
    <property type="entry name" value="TRANSFORMING GROWTH FACTOR-BETA RECEPTOR-ASSOCIATED PROTEIN 1"/>
    <property type="match status" value="1"/>
</dbReference>
<dbReference type="Pfam" id="PF00780">
    <property type="entry name" value="CNH"/>
    <property type="match status" value="1"/>
</dbReference>
<dbReference type="Pfam" id="PF10366">
    <property type="entry name" value="Vps39_1"/>
    <property type="match status" value="1"/>
</dbReference>
<dbReference type="Pfam" id="PF10367">
    <property type="entry name" value="zf-Vps39_C"/>
    <property type="match status" value="1"/>
</dbReference>
<dbReference type="PROSITE" id="PS50236">
    <property type="entry name" value="CHCR"/>
    <property type="match status" value="1"/>
</dbReference>
<dbReference type="PROSITE" id="PS50219">
    <property type="entry name" value="CNH"/>
    <property type="match status" value="1"/>
</dbReference>
<accession>Q8WUH2</accession>
<accession>A8K5R7</accession>
<accession>D3DVJ8</accession>
<accession>O60466</accession>
<gene>
    <name type="primary">TGFBRAP1</name>
</gene>
<name>TGFA1_HUMAN</name>